<keyword id="KW-1185">Reference proteome</keyword>
<evidence type="ECO:0000269" key="1">
    <source>
    </source>
</evidence>
<evidence type="ECO:0000303" key="2">
    <source>
    </source>
</evidence>
<protein>
    <recommendedName>
        <fullName evidence="2">Immune protein Tsi7</fullName>
    </recommendedName>
</protein>
<feature type="chain" id="PRO_0000449113" description="Immune protein Tsi7">
    <location>
        <begin position="1"/>
        <end position="306"/>
    </location>
</feature>
<proteinExistence type="evidence at protein level"/>
<dbReference type="EMBL" id="AE004091">
    <property type="protein sequence ID" value="AAG03490.1"/>
    <property type="molecule type" value="Genomic_DNA"/>
</dbReference>
<dbReference type="PIR" id="A83634">
    <property type="entry name" value="A83634"/>
</dbReference>
<dbReference type="RefSeq" id="NP_248790.1">
    <property type="nucleotide sequence ID" value="NC_002516.2"/>
</dbReference>
<dbReference type="RefSeq" id="WP_003115069.1">
    <property type="nucleotide sequence ID" value="NZ_QZGE01000015.1"/>
</dbReference>
<dbReference type="SMR" id="Q9I732"/>
<dbReference type="STRING" id="208964.PA0100"/>
<dbReference type="PaxDb" id="208964-PA0100"/>
<dbReference type="DNASU" id="880727"/>
<dbReference type="GeneID" id="880727"/>
<dbReference type="KEGG" id="pae:PA0100"/>
<dbReference type="PATRIC" id="fig|208964.12.peg.104"/>
<dbReference type="PseudoCAP" id="PA0100"/>
<dbReference type="HOGENOM" id="CLU_071258_0_1_6"/>
<dbReference type="InParanoid" id="Q9I732"/>
<dbReference type="OrthoDB" id="6829668at2"/>
<dbReference type="BioCyc" id="PAER208964:G1FZ6-102-MONOMER"/>
<dbReference type="Proteomes" id="UP000002438">
    <property type="component" value="Chromosome"/>
</dbReference>
<dbReference type="SUPFAM" id="SSF63829">
    <property type="entry name" value="Calcium-dependent phosphotriesterase"/>
    <property type="match status" value="1"/>
</dbReference>
<gene>
    <name evidence="2" type="primary">tsi7</name>
    <name type="ordered locus">PA0100</name>
</gene>
<sequence length="306" mass="33723">MLKKLSPIFSNITGVVRYQDLAYVASVSDEIQEQNIAHSYVTEWDCGTWCVAGEDDDMLPWEIVSATVVHEPVEQALFLGARGQVFCMGSGDIHEEQLPDGDDAIGGRGNMRGVACIDGVAYACGMDRQVYRRFDENDWRAIDTGARPPAGSEAVVGFEAIGGFGAREIYAVGWDGEIWQYDGKRWQPRESPTNLILTAICCAEDGSVYACGQAGTLLRGRNDHWEIIAQDDVDEDLWSLAWFDGALYVSSATAVYTLVGGHLKEVDFGDEQPQRCFHLSAADGVLWSIAAKDIFSFDGQQWTRID</sequence>
<reference key="1">
    <citation type="journal article" date="2000" name="Nature">
        <title>Complete genome sequence of Pseudomonas aeruginosa PAO1, an opportunistic pathogen.</title>
        <authorList>
            <person name="Stover C.K."/>
            <person name="Pham X.-Q.T."/>
            <person name="Erwin A.L."/>
            <person name="Mizoguchi S.D."/>
            <person name="Warrener P."/>
            <person name="Hickey M.J."/>
            <person name="Brinkman F.S.L."/>
            <person name="Hufnagle W.O."/>
            <person name="Kowalik D.J."/>
            <person name="Lagrou M."/>
            <person name="Garber R.L."/>
            <person name="Goltry L."/>
            <person name="Tolentino E."/>
            <person name="Westbrock-Wadman S."/>
            <person name="Yuan Y."/>
            <person name="Brody L.L."/>
            <person name="Coulter S.N."/>
            <person name="Folger K.R."/>
            <person name="Kas A."/>
            <person name="Larbig K."/>
            <person name="Lim R.M."/>
            <person name="Smith K.A."/>
            <person name="Spencer D.H."/>
            <person name="Wong G.K.-S."/>
            <person name="Wu Z."/>
            <person name="Paulsen I.T."/>
            <person name="Reizer J."/>
            <person name="Saier M.H. Jr."/>
            <person name="Hancock R.E.W."/>
            <person name="Lory S."/>
            <person name="Olson M.V."/>
        </authorList>
    </citation>
    <scope>NUCLEOTIDE SEQUENCE [LARGE SCALE GENOMIC DNA]</scope>
    <source>
        <strain>ATCC 15692 / DSM 22644 / CIP 104116 / JCM 14847 / LMG 12228 / 1C / PRS 101 / PAO1</strain>
    </source>
</reference>
<reference key="2">
    <citation type="journal article" date="2018" name="Proc. Natl. Acad. Sci. U.S.A.">
        <title>The Pseudomonas aeruginosa T6SS-VgrG1b spike is topped by a PAAR protein eliciting DNA damage to bacterial competitors.</title>
        <authorList>
            <person name="Pissaridou P."/>
            <person name="Allsopp L.P."/>
            <person name="Wettstadt S."/>
            <person name="Howard S.A."/>
            <person name="Mavridou D.A.I."/>
            <person name="Filloux A."/>
        </authorList>
    </citation>
    <scope>FUNCTION</scope>
    <scope>INTERACTION WITH TSE7</scope>
    <source>
        <strain>ATCC 15692 / DSM 22644 / CIP 104116 / JCM 14847 / LMG 12228 / 1C / PRS 101 / PAO1</strain>
    </source>
</reference>
<name>TSI7_PSEAE</name>
<comment type="function">
    <text evidence="1">Immunity protein that plays a role in preventing early activation of toxin Tse7. Protects thereby cells from Tse7 DNase activity.</text>
</comment>
<comment type="subunit">
    <text evidence="1">Interacts with Tse7.</text>
</comment>
<accession>Q9I732</accession>
<organism>
    <name type="scientific">Pseudomonas aeruginosa (strain ATCC 15692 / DSM 22644 / CIP 104116 / JCM 14847 / LMG 12228 / 1C / PRS 101 / PAO1)</name>
    <dbReference type="NCBI Taxonomy" id="208964"/>
    <lineage>
        <taxon>Bacteria</taxon>
        <taxon>Pseudomonadati</taxon>
        <taxon>Pseudomonadota</taxon>
        <taxon>Gammaproteobacteria</taxon>
        <taxon>Pseudomonadales</taxon>
        <taxon>Pseudomonadaceae</taxon>
        <taxon>Pseudomonas</taxon>
    </lineage>
</organism>